<proteinExistence type="inferred from homology"/>
<organism>
    <name type="scientific">Staphylococcus aureus (strain COL)</name>
    <dbReference type="NCBI Taxonomy" id="93062"/>
    <lineage>
        <taxon>Bacteria</taxon>
        <taxon>Bacillati</taxon>
        <taxon>Bacillota</taxon>
        <taxon>Bacilli</taxon>
        <taxon>Bacillales</taxon>
        <taxon>Staphylococcaceae</taxon>
        <taxon>Staphylococcus</taxon>
    </lineage>
</organism>
<protein>
    <recommendedName>
        <fullName evidence="1">Nucleoid-associated protein SACOL0521</fullName>
    </recommendedName>
</protein>
<sequence>MRGGGNMQQMMKQMQKMQKKMAQEQEKLKEERIVGTAGGGMVAVTVTGHKEVVDVEIKEEAVDPDDIEMLQDLVLAATNEAMNKADELTQERLGKHTQGLNIPGM</sequence>
<evidence type="ECO:0000255" key="1">
    <source>
        <dbReference type="HAMAP-Rule" id="MF_00274"/>
    </source>
</evidence>
<evidence type="ECO:0000256" key="2">
    <source>
        <dbReference type="SAM" id="MobiDB-lite"/>
    </source>
</evidence>
<accession>Q5HIJ8</accession>
<gene>
    <name type="ordered locus">SACOL0521</name>
</gene>
<feature type="chain" id="PRO_0000170435" description="Nucleoid-associated protein SACOL0521">
    <location>
        <begin position="1"/>
        <end position="105"/>
    </location>
</feature>
<feature type="region of interest" description="Disordered" evidence="2">
    <location>
        <begin position="1"/>
        <end position="33"/>
    </location>
</feature>
<feature type="compositionally biased region" description="Low complexity" evidence="2">
    <location>
        <begin position="7"/>
        <end position="16"/>
    </location>
</feature>
<feature type="compositionally biased region" description="Basic and acidic residues" evidence="2">
    <location>
        <begin position="21"/>
        <end position="33"/>
    </location>
</feature>
<keyword id="KW-0963">Cytoplasm</keyword>
<keyword id="KW-0238">DNA-binding</keyword>
<dbReference type="EMBL" id="CP000046">
    <property type="protein sequence ID" value="AAW37640.1"/>
    <property type="molecule type" value="Genomic_DNA"/>
</dbReference>
<dbReference type="RefSeq" id="WP_001213992.1">
    <property type="nucleotide sequence ID" value="NZ_JBGOFO010000010.1"/>
</dbReference>
<dbReference type="SMR" id="Q5HIJ8"/>
<dbReference type="KEGG" id="sac:SACOL0521"/>
<dbReference type="HOGENOM" id="CLU_140930_1_0_9"/>
<dbReference type="Proteomes" id="UP000000530">
    <property type="component" value="Chromosome"/>
</dbReference>
<dbReference type="GO" id="GO:0043590">
    <property type="term" value="C:bacterial nucleoid"/>
    <property type="evidence" value="ECO:0007669"/>
    <property type="project" value="UniProtKB-UniRule"/>
</dbReference>
<dbReference type="GO" id="GO:0005829">
    <property type="term" value="C:cytosol"/>
    <property type="evidence" value="ECO:0007669"/>
    <property type="project" value="TreeGrafter"/>
</dbReference>
<dbReference type="GO" id="GO:0003677">
    <property type="term" value="F:DNA binding"/>
    <property type="evidence" value="ECO:0007669"/>
    <property type="project" value="UniProtKB-UniRule"/>
</dbReference>
<dbReference type="FunFam" id="3.30.1310.10:FF:000002">
    <property type="entry name" value="Nucleoid-associated protein IKC_06587"/>
    <property type="match status" value="1"/>
</dbReference>
<dbReference type="Gene3D" id="3.30.1310.10">
    <property type="entry name" value="Nucleoid-associated protein YbaB-like domain"/>
    <property type="match status" value="1"/>
</dbReference>
<dbReference type="HAMAP" id="MF_00274">
    <property type="entry name" value="DNA_YbaB_EbfC"/>
    <property type="match status" value="1"/>
</dbReference>
<dbReference type="InterPro" id="IPR036894">
    <property type="entry name" value="YbaB-like_sf"/>
</dbReference>
<dbReference type="InterPro" id="IPR004401">
    <property type="entry name" value="YbaB/EbfC"/>
</dbReference>
<dbReference type="NCBIfam" id="TIGR00103">
    <property type="entry name" value="DNA_YbaB_EbfC"/>
    <property type="match status" value="1"/>
</dbReference>
<dbReference type="PANTHER" id="PTHR33449">
    <property type="entry name" value="NUCLEOID-ASSOCIATED PROTEIN YBAB"/>
    <property type="match status" value="1"/>
</dbReference>
<dbReference type="PANTHER" id="PTHR33449:SF1">
    <property type="entry name" value="NUCLEOID-ASSOCIATED PROTEIN YBAB"/>
    <property type="match status" value="1"/>
</dbReference>
<dbReference type="Pfam" id="PF02575">
    <property type="entry name" value="YbaB_DNA_bd"/>
    <property type="match status" value="1"/>
</dbReference>
<dbReference type="PIRSF" id="PIRSF004555">
    <property type="entry name" value="UCP004555"/>
    <property type="match status" value="1"/>
</dbReference>
<dbReference type="SUPFAM" id="SSF82607">
    <property type="entry name" value="YbaB-like"/>
    <property type="match status" value="1"/>
</dbReference>
<comment type="function">
    <text evidence="1">Binds to DNA and alters its conformation. May be involved in regulation of gene expression, nucleoid organization and DNA protection.</text>
</comment>
<comment type="subunit">
    <text evidence="1">Homodimer.</text>
</comment>
<comment type="subcellular location">
    <subcellularLocation>
        <location evidence="1">Cytoplasm</location>
        <location evidence="1">Nucleoid</location>
    </subcellularLocation>
</comment>
<comment type="similarity">
    <text evidence="1">Belongs to the YbaB/EbfC family.</text>
</comment>
<reference key="1">
    <citation type="journal article" date="2005" name="J. Bacteriol.">
        <title>Insights on evolution of virulence and resistance from the complete genome analysis of an early methicillin-resistant Staphylococcus aureus strain and a biofilm-producing methicillin-resistant Staphylococcus epidermidis strain.</title>
        <authorList>
            <person name="Gill S.R."/>
            <person name="Fouts D.E."/>
            <person name="Archer G.L."/>
            <person name="Mongodin E.F."/>
            <person name="DeBoy R.T."/>
            <person name="Ravel J."/>
            <person name="Paulsen I.T."/>
            <person name="Kolonay J.F."/>
            <person name="Brinkac L.M."/>
            <person name="Beanan M.J."/>
            <person name="Dodson R.J."/>
            <person name="Daugherty S.C."/>
            <person name="Madupu R."/>
            <person name="Angiuoli S.V."/>
            <person name="Durkin A.S."/>
            <person name="Haft D.H."/>
            <person name="Vamathevan J.J."/>
            <person name="Khouri H."/>
            <person name="Utterback T.R."/>
            <person name="Lee C."/>
            <person name="Dimitrov G."/>
            <person name="Jiang L."/>
            <person name="Qin H."/>
            <person name="Weidman J."/>
            <person name="Tran K."/>
            <person name="Kang K.H."/>
            <person name="Hance I.R."/>
            <person name="Nelson K.E."/>
            <person name="Fraser C.M."/>
        </authorList>
    </citation>
    <scope>NUCLEOTIDE SEQUENCE [LARGE SCALE GENOMIC DNA]</scope>
    <source>
        <strain>COL</strain>
    </source>
</reference>
<name>Y521_STAAC</name>